<protein>
    <recommendedName>
        <fullName evidence="1">UDP-N-acetylenolpyruvoylglucosamine reductase</fullName>
        <ecNumber evidence="1">1.3.1.98</ecNumber>
    </recommendedName>
    <alternativeName>
        <fullName evidence="1">UDP-N-acetylmuramate dehydrogenase</fullName>
    </alternativeName>
</protein>
<name>MURB_STRA3</name>
<gene>
    <name evidence="1" type="primary">murB</name>
    <name type="ordered locus">gbs1179</name>
</gene>
<dbReference type="EC" id="1.3.1.98" evidence="1"/>
<dbReference type="EMBL" id="AL766849">
    <property type="protein sequence ID" value="CAD46838.1"/>
    <property type="molecule type" value="Genomic_DNA"/>
</dbReference>
<dbReference type="RefSeq" id="WP_000598027.1">
    <property type="nucleotide sequence ID" value="NC_004368.1"/>
</dbReference>
<dbReference type="SMR" id="P65464"/>
<dbReference type="GeneID" id="66886037"/>
<dbReference type="KEGG" id="san:gbs1179"/>
<dbReference type="eggNOG" id="COG0812">
    <property type="taxonomic scope" value="Bacteria"/>
</dbReference>
<dbReference type="HOGENOM" id="CLU_035304_1_1_9"/>
<dbReference type="UniPathway" id="UPA00219"/>
<dbReference type="Proteomes" id="UP000000823">
    <property type="component" value="Chromosome"/>
</dbReference>
<dbReference type="GO" id="GO:0005829">
    <property type="term" value="C:cytosol"/>
    <property type="evidence" value="ECO:0007669"/>
    <property type="project" value="TreeGrafter"/>
</dbReference>
<dbReference type="GO" id="GO:0071949">
    <property type="term" value="F:FAD binding"/>
    <property type="evidence" value="ECO:0007669"/>
    <property type="project" value="InterPro"/>
</dbReference>
<dbReference type="GO" id="GO:0008762">
    <property type="term" value="F:UDP-N-acetylmuramate dehydrogenase activity"/>
    <property type="evidence" value="ECO:0007669"/>
    <property type="project" value="UniProtKB-UniRule"/>
</dbReference>
<dbReference type="GO" id="GO:0051301">
    <property type="term" value="P:cell division"/>
    <property type="evidence" value="ECO:0007669"/>
    <property type="project" value="UniProtKB-KW"/>
</dbReference>
<dbReference type="GO" id="GO:0071555">
    <property type="term" value="P:cell wall organization"/>
    <property type="evidence" value="ECO:0007669"/>
    <property type="project" value="UniProtKB-KW"/>
</dbReference>
<dbReference type="GO" id="GO:0009252">
    <property type="term" value="P:peptidoglycan biosynthetic process"/>
    <property type="evidence" value="ECO:0007669"/>
    <property type="project" value="UniProtKB-UniRule"/>
</dbReference>
<dbReference type="GO" id="GO:0008360">
    <property type="term" value="P:regulation of cell shape"/>
    <property type="evidence" value="ECO:0007669"/>
    <property type="project" value="UniProtKB-KW"/>
</dbReference>
<dbReference type="Gene3D" id="3.30.465.10">
    <property type="match status" value="1"/>
</dbReference>
<dbReference type="Gene3D" id="3.90.78.10">
    <property type="entry name" value="UDP-N-acetylenolpyruvoylglucosamine reductase, C-terminal domain"/>
    <property type="match status" value="1"/>
</dbReference>
<dbReference type="Gene3D" id="3.30.43.10">
    <property type="entry name" value="Uridine Diphospho-n-acetylenolpyruvylglucosamine Reductase, domain 2"/>
    <property type="match status" value="1"/>
</dbReference>
<dbReference type="HAMAP" id="MF_00037">
    <property type="entry name" value="MurB"/>
    <property type="match status" value="1"/>
</dbReference>
<dbReference type="InterPro" id="IPR016166">
    <property type="entry name" value="FAD-bd_PCMH"/>
</dbReference>
<dbReference type="InterPro" id="IPR036318">
    <property type="entry name" value="FAD-bd_PCMH-like_sf"/>
</dbReference>
<dbReference type="InterPro" id="IPR016167">
    <property type="entry name" value="FAD-bd_PCMH_sub1"/>
</dbReference>
<dbReference type="InterPro" id="IPR016169">
    <property type="entry name" value="FAD-bd_PCMH_sub2"/>
</dbReference>
<dbReference type="InterPro" id="IPR003170">
    <property type="entry name" value="MurB"/>
</dbReference>
<dbReference type="InterPro" id="IPR011601">
    <property type="entry name" value="MurB_C"/>
</dbReference>
<dbReference type="InterPro" id="IPR036635">
    <property type="entry name" value="MurB_C_sf"/>
</dbReference>
<dbReference type="InterPro" id="IPR006094">
    <property type="entry name" value="Oxid_FAD_bind_N"/>
</dbReference>
<dbReference type="NCBIfam" id="TIGR00179">
    <property type="entry name" value="murB"/>
    <property type="match status" value="1"/>
</dbReference>
<dbReference type="NCBIfam" id="NF010480">
    <property type="entry name" value="PRK13905.1"/>
    <property type="match status" value="1"/>
</dbReference>
<dbReference type="PANTHER" id="PTHR21071">
    <property type="entry name" value="UDP-N-ACETYLENOLPYRUVOYLGLUCOSAMINE REDUCTASE"/>
    <property type="match status" value="1"/>
</dbReference>
<dbReference type="PANTHER" id="PTHR21071:SF4">
    <property type="entry name" value="UDP-N-ACETYLENOLPYRUVOYLGLUCOSAMINE REDUCTASE"/>
    <property type="match status" value="1"/>
</dbReference>
<dbReference type="Pfam" id="PF01565">
    <property type="entry name" value="FAD_binding_4"/>
    <property type="match status" value="1"/>
</dbReference>
<dbReference type="Pfam" id="PF02873">
    <property type="entry name" value="MurB_C"/>
    <property type="match status" value="1"/>
</dbReference>
<dbReference type="SUPFAM" id="SSF56176">
    <property type="entry name" value="FAD-binding/transporter-associated domain-like"/>
    <property type="match status" value="1"/>
</dbReference>
<dbReference type="SUPFAM" id="SSF56194">
    <property type="entry name" value="Uridine diphospho-N-Acetylenolpyruvylglucosamine reductase, MurB, C-terminal domain"/>
    <property type="match status" value="1"/>
</dbReference>
<dbReference type="PROSITE" id="PS51387">
    <property type="entry name" value="FAD_PCMH"/>
    <property type="match status" value="1"/>
</dbReference>
<comment type="function">
    <text evidence="1">Cell wall formation.</text>
</comment>
<comment type="catalytic activity">
    <reaction evidence="1">
        <text>UDP-N-acetyl-alpha-D-muramate + NADP(+) = UDP-N-acetyl-3-O-(1-carboxyvinyl)-alpha-D-glucosamine + NADPH + H(+)</text>
        <dbReference type="Rhea" id="RHEA:12248"/>
        <dbReference type="ChEBI" id="CHEBI:15378"/>
        <dbReference type="ChEBI" id="CHEBI:57783"/>
        <dbReference type="ChEBI" id="CHEBI:58349"/>
        <dbReference type="ChEBI" id="CHEBI:68483"/>
        <dbReference type="ChEBI" id="CHEBI:70757"/>
        <dbReference type="EC" id="1.3.1.98"/>
    </reaction>
</comment>
<comment type="cofactor">
    <cofactor evidence="1">
        <name>FAD</name>
        <dbReference type="ChEBI" id="CHEBI:57692"/>
    </cofactor>
</comment>
<comment type="pathway">
    <text evidence="1">Cell wall biogenesis; peptidoglycan biosynthesis.</text>
</comment>
<comment type="subcellular location">
    <subcellularLocation>
        <location evidence="1">Cytoplasm</location>
    </subcellularLocation>
</comment>
<comment type="similarity">
    <text evidence="1">Belongs to the MurB family.</text>
</comment>
<proteinExistence type="inferred from homology"/>
<keyword id="KW-0131">Cell cycle</keyword>
<keyword id="KW-0132">Cell division</keyword>
<keyword id="KW-0133">Cell shape</keyword>
<keyword id="KW-0961">Cell wall biogenesis/degradation</keyword>
<keyword id="KW-0963">Cytoplasm</keyword>
<keyword id="KW-0274">FAD</keyword>
<keyword id="KW-0285">Flavoprotein</keyword>
<keyword id="KW-0521">NADP</keyword>
<keyword id="KW-0560">Oxidoreductase</keyword>
<keyword id="KW-0573">Peptidoglycan synthesis</keyword>
<accession>P65464</accession>
<accession>Q8DZI9</accession>
<accession>Q8E553</accession>
<evidence type="ECO:0000255" key="1">
    <source>
        <dbReference type="HAMAP-Rule" id="MF_00037"/>
    </source>
</evidence>
<organism>
    <name type="scientific">Streptococcus agalactiae serotype III (strain NEM316)</name>
    <dbReference type="NCBI Taxonomy" id="211110"/>
    <lineage>
        <taxon>Bacteria</taxon>
        <taxon>Bacillati</taxon>
        <taxon>Bacillota</taxon>
        <taxon>Bacilli</taxon>
        <taxon>Lactobacillales</taxon>
        <taxon>Streptococcaceae</taxon>
        <taxon>Streptococcus</taxon>
    </lineage>
</organism>
<sequence>MIKTIQKELEGLDIRFDEPLKKYTYTKVGGPADYLAFPRNRLELSRIVKFANSQNIPWMVLGNASNIIVRDGGIRGFVIMFDKLSTVTVNGYVIEAEAGANLIETTRIARYHSLTGFEFACGIPGSVGGAVFMNAGAYGGEIAHILLSAQVLTPQGELKTIEARNMQFGYRHSVIQESGDIVISAKFALKPGDHLMITQEMDRLTYLRELKQPLEYPSCGSVFKRPPGHFAGQLISEAHLKGQRIGGVEVSQKHAGFMVNIAEGSAQDYENLIEHVINTVESTSGVHLEPEVRIIGESLL</sequence>
<feature type="chain" id="PRO_0000179265" description="UDP-N-acetylenolpyruvoylglucosamine reductase">
    <location>
        <begin position="1"/>
        <end position="300"/>
    </location>
</feature>
<feature type="domain" description="FAD-binding PCMH-type" evidence="1">
    <location>
        <begin position="27"/>
        <end position="192"/>
    </location>
</feature>
<feature type="active site" evidence="1">
    <location>
        <position position="171"/>
    </location>
</feature>
<feature type="active site" description="Proton donor" evidence="1">
    <location>
        <position position="221"/>
    </location>
</feature>
<feature type="active site" evidence="1">
    <location>
        <position position="291"/>
    </location>
</feature>
<reference key="1">
    <citation type="journal article" date="2002" name="Mol. Microbiol.">
        <title>Genome sequence of Streptococcus agalactiae, a pathogen causing invasive neonatal disease.</title>
        <authorList>
            <person name="Glaser P."/>
            <person name="Rusniok C."/>
            <person name="Buchrieser C."/>
            <person name="Chevalier F."/>
            <person name="Frangeul L."/>
            <person name="Msadek T."/>
            <person name="Zouine M."/>
            <person name="Couve E."/>
            <person name="Lalioui L."/>
            <person name="Poyart C."/>
            <person name="Trieu-Cuot P."/>
            <person name="Kunst F."/>
        </authorList>
    </citation>
    <scope>NUCLEOTIDE SEQUENCE [LARGE SCALE GENOMIC DNA]</scope>
    <source>
        <strain>NEM316</strain>
    </source>
</reference>